<evidence type="ECO:0000255" key="1"/>
<evidence type="ECO:0000305" key="2"/>
<proteinExistence type="inferred from homology"/>
<dbReference type="EMBL" id="AE017224">
    <property type="protein sequence ID" value="AAX75994.1"/>
    <property type="molecule type" value="Genomic_DNA"/>
</dbReference>
<dbReference type="RefSeq" id="WP_002965989.1">
    <property type="nucleotide sequence ID" value="NC_006933.1"/>
</dbReference>
<dbReference type="SMR" id="Q578E0"/>
<dbReference type="EnsemblBacteria" id="AAX75994">
    <property type="protein sequence ID" value="AAX75994"/>
    <property type="gene ID" value="BruAb2_0578"/>
</dbReference>
<dbReference type="KEGG" id="bmb:BruAb2_0578"/>
<dbReference type="HOGENOM" id="CLU_027128_1_2_5"/>
<dbReference type="Proteomes" id="UP000000540">
    <property type="component" value="Chromosome II"/>
</dbReference>
<dbReference type="GO" id="GO:0006865">
    <property type="term" value="P:amino acid transport"/>
    <property type="evidence" value="ECO:0007669"/>
    <property type="project" value="UniProtKB-KW"/>
</dbReference>
<dbReference type="CDD" id="cd20013">
    <property type="entry name" value="PBP1_RPA0985_benzoate-like"/>
    <property type="match status" value="1"/>
</dbReference>
<dbReference type="Gene3D" id="3.40.50.2300">
    <property type="match status" value="2"/>
</dbReference>
<dbReference type="InterPro" id="IPR051010">
    <property type="entry name" value="BCAA_transport"/>
</dbReference>
<dbReference type="InterPro" id="IPR028081">
    <property type="entry name" value="Leu-bd"/>
</dbReference>
<dbReference type="InterPro" id="IPR000709">
    <property type="entry name" value="Leu_Ile_Val-bd"/>
</dbReference>
<dbReference type="InterPro" id="IPR028082">
    <property type="entry name" value="Peripla_BP_I"/>
</dbReference>
<dbReference type="PANTHER" id="PTHR30483">
    <property type="entry name" value="LEUCINE-SPECIFIC-BINDING PROTEIN"/>
    <property type="match status" value="1"/>
</dbReference>
<dbReference type="PANTHER" id="PTHR30483:SF6">
    <property type="entry name" value="PERIPLASMIC BINDING PROTEIN OF ABC TRANSPORTER FOR NATURAL AMINO ACIDS"/>
    <property type="match status" value="1"/>
</dbReference>
<dbReference type="Pfam" id="PF13458">
    <property type="entry name" value="Peripla_BP_6"/>
    <property type="match status" value="1"/>
</dbReference>
<dbReference type="PRINTS" id="PR00337">
    <property type="entry name" value="LEUILEVALBP"/>
</dbReference>
<dbReference type="SUPFAM" id="SSF53822">
    <property type="entry name" value="Periplasmic binding protein-like I"/>
    <property type="match status" value="1"/>
</dbReference>
<reference key="1">
    <citation type="journal article" date="2005" name="J. Bacteriol.">
        <title>Completion of the genome sequence of Brucella abortus and comparison to the highly similar genomes of Brucella melitensis and Brucella suis.</title>
        <authorList>
            <person name="Halling S.M."/>
            <person name="Peterson-Burch B.D."/>
            <person name="Bricker B.J."/>
            <person name="Zuerner R.L."/>
            <person name="Qing Z."/>
            <person name="Li L.-L."/>
            <person name="Kapur V."/>
            <person name="Alt D.P."/>
            <person name="Olsen S.C."/>
        </authorList>
    </citation>
    <scope>NUCLEOTIDE SEQUENCE [LARGE SCALE GENOMIC DNA]</scope>
    <source>
        <strain>9-941</strain>
    </source>
</reference>
<feature type="signal peptide" evidence="1">
    <location>
        <begin position="1"/>
        <end position="21"/>
    </location>
</feature>
<feature type="chain" id="PRO_0000282530" description="Leu/Ile/Val-binding protein homolog 6">
    <location>
        <begin position="22"/>
        <end position="390"/>
    </location>
</feature>
<organism>
    <name type="scientific">Brucella abortus biovar 1 (strain 9-941)</name>
    <dbReference type="NCBI Taxonomy" id="262698"/>
    <lineage>
        <taxon>Bacteria</taxon>
        <taxon>Pseudomonadati</taxon>
        <taxon>Pseudomonadota</taxon>
        <taxon>Alphaproteobacteria</taxon>
        <taxon>Hyphomicrobiales</taxon>
        <taxon>Brucellaceae</taxon>
        <taxon>Brucella/Ochrobactrum group</taxon>
        <taxon>Brucella</taxon>
    </lineage>
</organism>
<gene>
    <name type="ordered locus">BruAb2_0578</name>
</gene>
<accession>Q578E0</accession>
<comment type="function">
    <text evidence="2">Component of an amino-acid transport system.</text>
</comment>
<comment type="similarity">
    <text evidence="2">Belongs to the leucine-binding protein family.</text>
</comment>
<keyword id="KW-0029">Amino-acid transport</keyword>
<keyword id="KW-0732">Signal</keyword>
<keyword id="KW-0813">Transport</keyword>
<protein>
    <recommendedName>
        <fullName>Leu/Ile/Val-binding protein homolog 6</fullName>
    </recommendedName>
</protein>
<name>LIVB6_BRUAB</name>
<sequence>MKKIALTALAVFSLAASAAYADVVKVGVIGPFSGPFALQGKNFKAGIDAYMAEHGNKVGDDTVEVVYRDVPQADPAQSKALAQELVVKEGVQYLAGFYFTPDAMAVTPILKQGNVPMVVMNAATSSIVTKSPYVVRTSFTTWQTSTPIARVALDKGVKKVISVVSDYGPGVDAENAFKAAFTDAGGEVVEAIRMPLATNDFSPIMQRIKDSGAQGVFAFLPSGPTTFGFMKAYVDNGLKSSGIQLFAPGDLTQESDLPALGENALGVLTTFHYAVSHDSPENRKFVEEARKAIGNPAELSFPSVGAYDGMHVIYKMIEATGGKKDAAKAVEAVKGMEWVSPRGPVSIDPESRHITQNIYLREVAKADDGTYYNKEIQTFEKQGDPGLKAQ</sequence>